<organism>
    <name type="scientific">Listeria monocytogenes serotype 1/2a (strain 08-5923)</name>
    <dbReference type="NCBI Taxonomy" id="637381"/>
    <lineage>
        <taxon>Bacteria</taxon>
        <taxon>Bacillati</taxon>
        <taxon>Bacillota</taxon>
        <taxon>Bacilli</taxon>
        <taxon>Bacillales</taxon>
        <taxon>Listeriaceae</taxon>
        <taxon>Listeria</taxon>
    </lineage>
</organism>
<evidence type="ECO:0000250" key="1">
    <source>
        <dbReference type="UniProtKB" id="P0C2E9"/>
    </source>
</evidence>
<evidence type="ECO:0000250" key="2">
    <source>
        <dbReference type="UniProtKB" id="P13128"/>
    </source>
</evidence>
<evidence type="ECO:0000250" key="3">
    <source>
        <dbReference type="UniProtKB" id="Q04IN8"/>
    </source>
</evidence>
<evidence type="ECO:0000255" key="4"/>
<evidence type="ECO:0000256" key="5">
    <source>
        <dbReference type="SAM" id="MobiDB-lite"/>
    </source>
</evidence>
<evidence type="ECO:0000305" key="6"/>
<gene>
    <name type="primary">hly</name>
    <name type="ordered locus">LM5923_2765</name>
</gene>
<proteinExistence type="inferred from homology"/>
<accession>D2PAJ7</accession>
<dbReference type="EMBL" id="CP001604">
    <property type="protein sequence ID" value="ADB72606.1"/>
    <property type="molecule type" value="Genomic_DNA"/>
</dbReference>
<dbReference type="RefSeq" id="WP_003722731.1">
    <property type="nucleotide sequence ID" value="NC_013768.1"/>
</dbReference>
<dbReference type="SMR" id="D2PAJ7"/>
<dbReference type="KEGG" id="lmy:LM5923_2765"/>
<dbReference type="HOGENOM" id="CLU_026912_0_0_9"/>
<dbReference type="GO" id="GO:0005576">
    <property type="term" value="C:extracellular region"/>
    <property type="evidence" value="ECO:0007669"/>
    <property type="project" value="UniProtKB-SubCell"/>
</dbReference>
<dbReference type="GO" id="GO:0020002">
    <property type="term" value="C:host cell plasma membrane"/>
    <property type="evidence" value="ECO:0007669"/>
    <property type="project" value="UniProtKB-SubCell"/>
</dbReference>
<dbReference type="GO" id="GO:0016020">
    <property type="term" value="C:membrane"/>
    <property type="evidence" value="ECO:0007669"/>
    <property type="project" value="UniProtKB-KW"/>
</dbReference>
<dbReference type="GO" id="GO:0015485">
    <property type="term" value="F:cholesterol binding"/>
    <property type="evidence" value="ECO:0007669"/>
    <property type="project" value="InterPro"/>
</dbReference>
<dbReference type="GO" id="GO:0090729">
    <property type="term" value="F:toxin activity"/>
    <property type="evidence" value="ECO:0007669"/>
    <property type="project" value="UniProtKB-KW"/>
</dbReference>
<dbReference type="GO" id="GO:0031640">
    <property type="term" value="P:killing of cells of another organism"/>
    <property type="evidence" value="ECO:0007669"/>
    <property type="project" value="UniProtKB-KW"/>
</dbReference>
<dbReference type="FunFam" id="2.60.40.1430:FF:000001">
    <property type="entry name" value="Thiol-activated cytolysin"/>
    <property type="match status" value="1"/>
</dbReference>
<dbReference type="Gene3D" id="3.30.1040.20">
    <property type="match status" value="1"/>
</dbReference>
<dbReference type="Gene3D" id="3.40.30.40">
    <property type="entry name" value="Perfringolysin"/>
    <property type="match status" value="1"/>
</dbReference>
<dbReference type="Gene3D" id="2.60.40.1430">
    <property type="entry name" value="Perfringolysin, domain 4"/>
    <property type="match status" value="1"/>
</dbReference>
<dbReference type="Gene3D" id="3.90.840.10">
    <property type="entry name" value="Thiol-activated cytolysin superfamily/Thiol-activated cytolysin, alpha-beta domain"/>
    <property type="match status" value="1"/>
</dbReference>
<dbReference type="InterPro" id="IPR035390">
    <property type="entry name" value="Thiol_cytolys_C"/>
</dbReference>
<dbReference type="InterPro" id="IPR038700">
    <property type="entry name" value="Thiol_cytolys_C_sf"/>
</dbReference>
<dbReference type="InterPro" id="IPR001869">
    <property type="entry name" value="Thiol_cytolysin"/>
</dbReference>
<dbReference type="InterPro" id="IPR036363">
    <property type="entry name" value="Thiol_cytolysin_ab_sf"/>
</dbReference>
<dbReference type="InterPro" id="IPR036359">
    <property type="entry name" value="Thiol_cytolysin_sf"/>
</dbReference>
<dbReference type="Pfam" id="PF17440">
    <property type="entry name" value="Thiol_cytolys_C"/>
    <property type="match status" value="1"/>
</dbReference>
<dbReference type="Pfam" id="PF01289">
    <property type="entry name" value="Thiol_cytolysin"/>
    <property type="match status" value="1"/>
</dbReference>
<dbReference type="PRINTS" id="PR01400">
    <property type="entry name" value="TACYTOLYSIN"/>
</dbReference>
<dbReference type="SUPFAM" id="SSF56978">
    <property type="entry name" value="Perfringolysin"/>
    <property type="match status" value="1"/>
</dbReference>
<dbReference type="PROSITE" id="PS00481">
    <property type="entry name" value="THIOL_CYTOLYSINS"/>
    <property type="match status" value="1"/>
</dbReference>
<feature type="signal peptide" evidence="4">
    <location>
        <begin position="1"/>
        <end position="24"/>
    </location>
</feature>
<feature type="chain" id="PRO_0000396805" description="Listeriolysin O">
    <location>
        <begin position="25"/>
        <end position="529"/>
    </location>
</feature>
<feature type="transmembrane region" description="Beta stranded" evidence="3">
    <location>
        <begin position="214"/>
        <end position="227"/>
    </location>
</feature>
<feature type="transmembrane region" description="Beta stranded" evidence="3">
    <location>
        <begin position="234"/>
        <end position="243"/>
    </location>
</feature>
<feature type="transmembrane region" description="Beta stranded" evidence="3">
    <location>
        <begin position="312"/>
        <end position="321"/>
    </location>
</feature>
<feature type="transmembrane region" description="Beta stranded" evidence="3">
    <location>
        <begin position="329"/>
        <end position="341"/>
    </location>
</feature>
<feature type="region of interest" description="Disordered" evidence="5">
    <location>
        <begin position="35"/>
        <end position="54"/>
    </location>
</feature>
<feature type="short sequence motif" description="Conserved undecapeptide" evidence="6">
    <location>
        <begin position="483"/>
        <end position="493"/>
    </location>
</feature>
<feature type="short sequence motif" description="Cholesterol binding" evidence="1">
    <location>
        <begin position="515"/>
        <end position="516"/>
    </location>
</feature>
<comment type="function">
    <text evidence="2">A cholesterol-dependent toxin that causes cytolysis by forming pores in cholesterol containing host membranes. After binding to target membranes, the protein undergoes a major conformation change, leading to its insertion in the host membrane and formation of an oligomeric pore complex. Cholesterol is required for binding to host membranes, membrane insertion and pore formation; cholesterol binding is mediated by a Thr-Leu pair in the C-terminus. Acts as a major virulence factor required for the escape of bacteria from phagosomal vacuoles and entry into the host cytosol. Can be reversibly inactivated by oxidation.</text>
</comment>
<comment type="activity regulation">
    <text evidence="2">Activity of listeriolysin O is regulated on multiple levels. It should be high in the phagosome, thereby allowing escape of the bacteria from the phagosomal compartment. Then, once inside the host cytosol, the activity must be controlled to prevent lysis of the host plasma membrane and loss of the intracellular environment.</text>
</comment>
<comment type="subunit">
    <text evidence="3">Homooligomeric pore complex of 35 to 50 subunits; when inserted in the host membrane.</text>
</comment>
<comment type="subcellular location">
    <subcellularLocation>
        <location evidence="2">Secreted</location>
    </subcellularLocation>
    <subcellularLocation>
        <location evidence="2">Host membrane</location>
        <topology evidence="3">Multi-pass membrane protein</topology>
    </subcellularLocation>
    <subcellularLocation>
        <location evidence="2">Host cell membrane</location>
        <topology evidence="3">Multi-pass membrane protein</topology>
    </subcellularLocation>
    <text evidence="3">Secreted as soluble protein that then inserts into the host membrane and forms pores formed by transmembrane beta-strands.</text>
</comment>
<comment type="similarity">
    <text evidence="6">Belongs to the cholesterol-dependent cytolysin family.</text>
</comment>
<keyword id="KW-0204">Cytolysis</keyword>
<keyword id="KW-0354">Hemolysis</keyword>
<keyword id="KW-1032">Host cell membrane</keyword>
<keyword id="KW-1043">Host membrane</keyword>
<keyword id="KW-0446">Lipid-binding</keyword>
<keyword id="KW-0472">Membrane</keyword>
<keyword id="KW-0964">Secreted</keyword>
<keyword id="KW-0732">Signal</keyword>
<keyword id="KW-0800">Toxin</keyword>
<keyword id="KW-0812">Transmembrane</keyword>
<keyword id="KW-1134">Transmembrane beta strand</keyword>
<keyword id="KW-0843">Virulence</keyword>
<protein>
    <recommendedName>
        <fullName>Listeriolysin O</fullName>
    </recommendedName>
    <alternativeName>
        <fullName>LLO</fullName>
    </alternativeName>
    <alternativeName>
        <fullName>Thiol-activated cytolysin</fullName>
    </alternativeName>
</protein>
<sequence length="529" mass="58688">MKKIMLVFITLILVSLPIAQQTEAKDASAFNKENSISSMAPPASPPASPKTPIEKKHADEIDKYIQGLDYNKNNVLVYHGDAVTNVPPRKGYKDGNEYIVVEKKKKSINQNNADIQVVNAISSLTYPGALVKANSELVENQPDVLPVKRDSLTLSIDLPGMTNQDNKIVVKNATKSNVNNAVNTLVERWNEKYAQAYPNVSAKIDYDDEMAYSESQLIAKFGTAFKAVNNSLNVNFGAISEGKMQEEVISFKQIYYNVNVNEPTRPSRFFGKAVTKEQLQALGVNAENPPAYISSVAYGRQVYLKLSTNSHSTKVKAAFDAAVSGKSVSGDVELTNIIKNSSFKAVIYGGSAKDEVQIIDGNLGDLRDILKKGATFNRETPGVPIAYTTNFLKDNELAVIKNNSEYIETTSKAYTDGKINIDHSGGYVAQFNISWDEVNYDPEGNEIVQHKNWSENNKSKLAHFTSSIYLPGNARNINVYAKECTGLAWEWWRTVIDDRNLPLVKNRNISIWGTTLYPKYSNKVDNPIE</sequence>
<reference key="1">
    <citation type="journal article" date="2010" name="BMC Genomics">
        <title>High-throughput genome sequencing of two Listeria monocytogenes clinical isolates during a large foodborne outbreak.</title>
        <authorList>
            <person name="Gilmour M.W."/>
            <person name="Graham M."/>
            <person name="Van Domselaar G."/>
            <person name="Tyler S."/>
            <person name="Kent H."/>
            <person name="Trout-Yakel K.M."/>
            <person name="Larios O."/>
            <person name="Allen V."/>
            <person name="Lee B."/>
            <person name="Nadon C."/>
        </authorList>
    </citation>
    <scope>NUCLEOTIDE SEQUENCE [LARGE SCALE GENOMIC DNA]</scope>
    <source>
        <strain>08-5923</strain>
    </source>
</reference>
<name>TACY_LISM2</name>